<keyword id="KW-0227">DNA damage</keyword>
<keyword id="KW-0233">DNA recombination</keyword>
<keyword id="KW-0234">DNA repair</keyword>
<keyword id="KW-0235">DNA replication</keyword>
<keyword id="KW-0238">DNA-binding</keyword>
<keyword id="KW-0479">Metal-binding</keyword>
<keyword id="KW-0862">Zinc</keyword>
<keyword id="KW-0863">Zinc-finger</keyword>
<comment type="function">
    <text>Binds preferentially to single-stranded DNA and therefore, destabilizes double-stranded DNA. It is involved in DNA replication, repair and recombination. Binds ss-DNA as the replication fork advances and stimulates the replisome processivity and accuracy.</text>
</comment>
<comment type="subunit">
    <text evidence="1">Homodimer in the absence of DNA, monomer when binding DNA.</text>
</comment>
<comment type="miscellaneous">
    <text evidence="1">Interacts with the polymerase and the uvsX and uvsY proteins.</text>
</comment>
<gene>
    <name type="primary">32</name>
    <name type="synonym">ssb</name>
</gene>
<reference key="1">
    <citation type="submission" date="1997-11" db="EMBL/GenBank/DDBJ databases">
        <authorList>
            <person name="Theimer C.A."/>
            <person name="Krisch H.M."/>
            <person name="Giedroc D.P."/>
        </authorList>
    </citation>
    <scope>NUCLEOTIDE SEQUENCE [GENOMIC DNA]</scope>
</reference>
<organism>
    <name type="scientific">Escherichia phage RB69</name>
    <name type="common">Bacteriophage RB69</name>
    <dbReference type="NCBI Taxonomy" id="12353"/>
    <lineage>
        <taxon>Viruses</taxon>
        <taxon>Duplodnaviria</taxon>
        <taxon>Heunggongvirae</taxon>
        <taxon>Uroviricota</taxon>
        <taxon>Caudoviricetes</taxon>
        <taxon>Straboviridae</taxon>
        <taxon>Tevenvirinae</taxon>
        <taxon>Mosigvirus</taxon>
        <taxon>Mosigvirus RB69</taxon>
    </lineage>
</organism>
<proteinExistence type="inferred from homology"/>
<name>VHED_BPR69</name>
<sequence length="49" mass="5314">MFKRKSTAELAAQMAKLAGNKGGFSSEDKGEWKLKLDNAGNGQAVIRFL</sequence>
<dbReference type="EMBL" id="AF033332">
    <property type="protein sequence ID" value="AAB87497.1"/>
    <property type="molecule type" value="Genomic_DNA"/>
</dbReference>
<dbReference type="SMR" id="O21959"/>
<dbReference type="GO" id="GO:0003677">
    <property type="term" value="F:DNA binding"/>
    <property type="evidence" value="ECO:0007669"/>
    <property type="project" value="UniProtKB-KW"/>
</dbReference>
<dbReference type="GO" id="GO:0008270">
    <property type="term" value="F:zinc ion binding"/>
    <property type="evidence" value="ECO:0007669"/>
    <property type="project" value="UniProtKB-KW"/>
</dbReference>
<dbReference type="GO" id="GO:0006310">
    <property type="term" value="P:DNA recombination"/>
    <property type="evidence" value="ECO:0007669"/>
    <property type="project" value="UniProtKB-KW"/>
</dbReference>
<dbReference type="GO" id="GO:0006281">
    <property type="term" value="P:DNA repair"/>
    <property type="evidence" value="ECO:0007669"/>
    <property type="project" value="UniProtKB-KW"/>
</dbReference>
<dbReference type="GO" id="GO:0006260">
    <property type="term" value="P:DNA replication"/>
    <property type="evidence" value="ECO:0007669"/>
    <property type="project" value="UniProtKB-KW"/>
</dbReference>
<dbReference type="Gene3D" id="3.90.198.10">
    <property type="entry name" value="Replication Fork Single-Stranded Dna Binding Protein"/>
    <property type="match status" value="1"/>
</dbReference>
<dbReference type="InterPro" id="IPR012340">
    <property type="entry name" value="NA-bd_OB-fold"/>
</dbReference>
<dbReference type="InterPro" id="IPR044947">
    <property type="entry name" value="Phage_T4_Gp32_ssDNA-bd_sf"/>
</dbReference>
<dbReference type="SUPFAM" id="SSF50249">
    <property type="entry name" value="Nucleic acid-binding proteins"/>
    <property type="match status" value="1"/>
</dbReference>
<accession>O21959</accession>
<protein>
    <recommendedName>
        <fullName>Single-stranded DNA-binding protein</fullName>
    </recommendedName>
    <alternativeName>
        <fullName>Gp32</fullName>
    </alternativeName>
    <alternativeName>
        <fullName>Helix-destabilizing protein</fullName>
    </alternativeName>
</protein>
<feature type="chain" id="PRO_0000165062" description="Single-stranded DNA-binding protein">
    <location>
        <begin position="1"/>
        <end position="49" status="greater than"/>
    </location>
</feature>
<feature type="non-terminal residue">
    <location>
        <position position="49"/>
    </location>
</feature>
<evidence type="ECO:0000250" key="1"/>
<organismHost>
    <name type="scientific">Escherichia coli</name>
    <dbReference type="NCBI Taxonomy" id="562"/>
</organismHost>